<protein>
    <recommendedName>
        <fullName evidence="1">Bifunctional protein GlmU</fullName>
    </recommendedName>
    <domain>
        <recommendedName>
            <fullName evidence="1">UDP-N-acetylglucosamine pyrophosphorylase</fullName>
            <ecNumber evidence="1">2.7.7.23</ecNumber>
        </recommendedName>
        <alternativeName>
            <fullName evidence="1">N-acetylglucosamine-1-phosphate uridyltransferase</fullName>
        </alternativeName>
    </domain>
    <domain>
        <recommendedName>
            <fullName evidence="1">Glucosamine-1-phosphate N-acetyltransferase</fullName>
            <ecNumber evidence="1">2.3.1.157</ecNumber>
        </recommendedName>
    </domain>
</protein>
<organism>
    <name type="scientific">Staphylococcus aureus (strain NCTC 8325 / PS 47)</name>
    <dbReference type="NCBI Taxonomy" id="93061"/>
    <lineage>
        <taxon>Bacteria</taxon>
        <taxon>Bacillati</taxon>
        <taxon>Bacillota</taxon>
        <taxon>Bacilli</taxon>
        <taxon>Bacillales</taxon>
        <taxon>Staphylococcaceae</taxon>
        <taxon>Staphylococcus</taxon>
    </lineage>
</organism>
<proteinExistence type="inferred from homology"/>
<evidence type="ECO:0000255" key="1">
    <source>
        <dbReference type="HAMAP-Rule" id="MF_01631"/>
    </source>
</evidence>
<comment type="function">
    <text evidence="1">Catalyzes the last two sequential reactions in the de novo biosynthetic pathway for UDP-N-acetylglucosamine (UDP-GlcNAc). The C-terminal domain catalyzes the transfer of acetyl group from acetyl coenzyme A to glucosamine-1-phosphate (GlcN-1-P) to produce N-acetylglucosamine-1-phosphate (GlcNAc-1-P), which is converted into UDP-GlcNAc by the transfer of uridine 5-monophosphate (from uridine 5-triphosphate), a reaction catalyzed by the N-terminal domain.</text>
</comment>
<comment type="catalytic activity">
    <reaction evidence="1">
        <text>alpha-D-glucosamine 1-phosphate + acetyl-CoA = N-acetyl-alpha-D-glucosamine 1-phosphate + CoA + H(+)</text>
        <dbReference type="Rhea" id="RHEA:13725"/>
        <dbReference type="ChEBI" id="CHEBI:15378"/>
        <dbReference type="ChEBI" id="CHEBI:57287"/>
        <dbReference type="ChEBI" id="CHEBI:57288"/>
        <dbReference type="ChEBI" id="CHEBI:57776"/>
        <dbReference type="ChEBI" id="CHEBI:58516"/>
        <dbReference type="EC" id="2.3.1.157"/>
    </reaction>
</comment>
<comment type="catalytic activity">
    <reaction evidence="1">
        <text>N-acetyl-alpha-D-glucosamine 1-phosphate + UTP + H(+) = UDP-N-acetyl-alpha-D-glucosamine + diphosphate</text>
        <dbReference type="Rhea" id="RHEA:13509"/>
        <dbReference type="ChEBI" id="CHEBI:15378"/>
        <dbReference type="ChEBI" id="CHEBI:33019"/>
        <dbReference type="ChEBI" id="CHEBI:46398"/>
        <dbReference type="ChEBI" id="CHEBI:57705"/>
        <dbReference type="ChEBI" id="CHEBI:57776"/>
        <dbReference type="EC" id="2.7.7.23"/>
    </reaction>
</comment>
<comment type="cofactor">
    <cofactor evidence="1">
        <name>Mg(2+)</name>
        <dbReference type="ChEBI" id="CHEBI:18420"/>
    </cofactor>
    <text evidence="1">Binds 1 Mg(2+) ion per subunit.</text>
</comment>
<comment type="pathway">
    <text evidence="1">Nucleotide-sugar biosynthesis; UDP-N-acetyl-alpha-D-glucosamine biosynthesis; N-acetyl-alpha-D-glucosamine 1-phosphate from alpha-D-glucosamine 6-phosphate (route II): step 2/2.</text>
</comment>
<comment type="pathway">
    <text evidence="1">Nucleotide-sugar biosynthesis; UDP-N-acetyl-alpha-D-glucosamine biosynthesis; UDP-N-acetyl-alpha-D-glucosamine from N-acetyl-alpha-D-glucosamine 1-phosphate: step 1/1.</text>
</comment>
<comment type="pathway">
    <text evidence="1">Bacterial outer membrane biogenesis; LPS lipid A biosynthesis.</text>
</comment>
<comment type="subunit">
    <text evidence="1">Homotrimer.</text>
</comment>
<comment type="subcellular location">
    <subcellularLocation>
        <location evidence="1">Cytoplasm</location>
    </subcellularLocation>
</comment>
<comment type="similarity">
    <text evidence="1">In the N-terminal section; belongs to the N-acetylglucosamine-1-phosphate uridyltransferase family.</text>
</comment>
<comment type="similarity">
    <text evidence="1">In the C-terminal section; belongs to the transferase hexapeptide repeat family.</text>
</comment>
<reference key="1">
    <citation type="book" date="2006" name="Gram positive pathogens, 2nd edition">
        <title>The Staphylococcus aureus NCTC 8325 genome.</title>
        <editorList>
            <person name="Fischetti V."/>
            <person name="Novick R."/>
            <person name="Ferretti J."/>
            <person name="Portnoy D."/>
            <person name="Rood J."/>
        </editorList>
        <authorList>
            <person name="Gillaspy A.F."/>
            <person name="Worrell V."/>
            <person name="Orvis J."/>
            <person name="Roe B.A."/>
            <person name="Dyer D.W."/>
            <person name="Iandolo J.J."/>
        </authorList>
    </citation>
    <scope>NUCLEOTIDE SEQUENCE [LARGE SCALE GENOMIC DNA]</scope>
    <source>
        <strain>NCTC 8325 / PS 47</strain>
    </source>
</reference>
<keyword id="KW-0012">Acyltransferase</keyword>
<keyword id="KW-0133">Cell shape</keyword>
<keyword id="KW-0961">Cell wall biogenesis/degradation</keyword>
<keyword id="KW-0963">Cytoplasm</keyword>
<keyword id="KW-0460">Magnesium</keyword>
<keyword id="KW-0479">Metal-binding</keyword>
<keyword id="KW-0511">Multifunctional enzyme</keyword>
<keyword id="KW-0548">Nucleotidyltransferase</keyword>
<keyword id="KW-0573">Peptidoglycan synthesis</keyword>
<keyword id="KW-1185">Reference proteome</keyword>
<keyword id="KW-0677">Repeat</keyword>
<keyword id="KW-0808">Transferase</keyword>
<sequence length="450" mass="48503">MRRHAIILAAGKGTRMKSKKYKVLHEVAGKPMVEHVLESVKGSGVDQVVTIVGHGAESVKGHLGERSLYSFQEEQLGTAHAVQMAKSHLEDKEGTTIVVCGDTPLITKETLVTLIAHHEDANAQATVLSASIQQPYGYGRIVRNASGRLERIVEEKDATQAEKDINEISSGIFAFNNKTLFEKLTQVKNDNAQGEYYLPDVLSLILNDGGIVEVYRTNDVEEIMGVNDRVMLSQAEKAMQRRTNHYHMLNGVTIIDPDSTYIGPDVTIGSDTVIEPGVRINGRTEIGEDVVIGQYSEINNSTIENGACIQQSVVNDASVGANTKVGPFAQLRPGAQLGADVKVGNFVEIKKADLKDGAKVSHLSYIGDAVIGERTNIGCGTITVNYDGENKFKTIVGKDSFVGCNVNLVAPVTIGDDVLVAAGSTITDDVPNDSLAVARARQTTKEGYRK</sequence>
<dbReference type="EC" id="2.7.7.23" evidence="1"/>
<dbReference type="EC" id="2.3.1.157" evidence="1"/>
<dbReference type="EMBL" id="CP000253">
    <property type="protein sequence ID" value="ABD29626.1"/>
    <property type="molecule type" value="Genomic_DNA"/>
</dbReference>
<dbReference type="RefSeq" id="WP_001252539.1">
    <property type="nucleotide sequence ID" value="NZ_LS483365.1"/>
</dbReference>
<dbReference type="RefSeq" id="YP_499050.1">
    <property type="nucleotide sequence ID" value="NC_007795.1"/>
</dbReference>
<dbReference type="SMR" id="Q2G0S3"/>
<dbReference type="STRING" id="93061.SAOUHSC_00471"/>
<dbReference type="PaxDb" id="1280-SAXN108_0551"/>
<dbReference type="GeneID" id="3920331"/>
<dbReference type="KEGG" id="sao:SAOUHSC_00471"/>
<dbReference type="PATRIC" id="fig|93061.5.peg.426"/>
<dbReference type="eggNOG" id="COG1207">
    <property type="taxonomic scope" value="Bacteria"/>
</dbReference>
<dbReference type="HOGENOM" id="CLU_029499_15_2_9"/>
<dbReference type="OrthoDB" id="9775031at2"/>
<dbReference type="UniPathway" id="UPA00113">
    <property type="reaction ID" value="UER00532"/>
</dbReference>
<dbReference type="UniPathway" id="UPA00113">
    <property type="reaction ID" value="UER00533"/>
</dbReference>
<dbReference type="UniPathway" id="UPA00973"/>
<dbReference type="Proteomes" id="UP000008816">
    <property type="component" value="Chromosome"/>
</dbReference>
<dbReference type="GO" id="GO:0005737">
    <property type="term" value="C:cytoplasm"/>
    <property type="evidence" value="ECO:0007669"/>
    <property type="project" value="UniProtKB-SubCell"/>
</dbReference>
<dbReference type="GO" id="GO:0016020">
    <property type="term" value="C:membrane"/>
    <property type="evidence" value="ECO:0007669"/>
    <property type="project" value="GOC"/>
</dbReference>
<dbReference type="GO" id="GO:0019134">
    <property type="term" value="F:glucosamine-1-phosphate N-acetyltransferase activity"/>
    <property type="evidence" value="ECO:0007669"/>
    <property type="project" value="UniProtKB-UniRule"/>
</dbReference>
<dbReference type="GO" id="GO:0000287">
    <property type="term" value="F:magnesium ion binding"/>
    <property type="evidence" value="ECO:0007669"/>
    <property type="project" value="UniProtKB-UniRule"/>
</dbReference>
<dbReference type="GO" id="GO:0003977">
    <property type="term" value="F:UDP-N-acetylglucosamine diphosphorylase activity"/>
    <property type="evidence" value="ECO:0007669"/>
    <property type="project" value="UniProtKB-UniRule"/>
</dbReference>
<dbReference type="GO" id="GO:0000902">
    <property type="term" value="P:cell morphogenesis"/>
    <property type="evidence" value="ECO:0007669"/>
    <property type="project" value="UniProtKB-UniRule"/>
</dbReference>
<dbReference type="GO" id="GO:0071555">
    <property type="term" value="P:cell wall organization"/>
    <property type="evidence" value="ECO:0007669"/>
    <property type="project" value="UniProtKB-KW"/>
</dbReference>
<dbReference type="GO" id="GO:0009245">
    <property type="term" value="P:lipid A biosynthetic process"/>
    <property type="evidence" value="ECO:0007669"/>
    <property type="project" value="UniProtKB-UniRule"/>
</dbReference>
<dbReference type="GO" id="GO:0009252">
    <property type="term" value="P:peptidoglycan biosynthetic process"/>
    <property type="evidence" value="ECO:0007669"/>
    <property type="project" value="UniProtKB-UniRule"/>
</dbReference>
<dbReference type="GO" id="GO:0008360">
    <property type="term" value="P:regulation of cell shape"/>
    <property type="evidence" value="ECO:0007669"/>
    <property type="project" value="UniProtKB-KW"/>
</dbReference>
<dbReference type="GO" id="GO:0006048">
    <property type="term" value="P:UDP-N-acetylglucosamine biosynthetic process"/>
    <property type="evidence" value="ECO:0007669"/>
    <property type="project" value="UniProtKB-UniPathway"/>
</dbReference>
<dbReference type="CDD" id="cd02540">
    <property type="entry name" value="GT2_GlmU_N_bac"/>
    <property type="match status" value="1"/>
</dbReference>
<dbReference type="CDD" id="cd03353">
    <property type="entry name" value="LbH_GlmU_C"/>
    <property type="match status" value="1"/>
</dbReference>
<dbReference type="Gene3D" id="2.160.10.10">
    <property type="entry name" value="Hexapeptide repeat proteins"/>
    <property type="match status" value="1"/>
</dbReference>
<dbReference type="Gene3D" id="3.90.550.10">
    <property type="entry name" value="Spore Coat Polysaccharide Biosynthesis Protein SpsA, Chain A"/>
    <property type="match status" value="1"/>
</dbReference>
<dbReference type="HAMAP" id="MF_01631">
    <property type="entry name" value="GlmU"/>
    <property type="match status" value="1"/>
</dbReference>
<dbReference type="InterPro" id="IPR005882">
    <property type="entry name" value="Bifunctional_GlmU"/>
</dbReference>
<dbReference type="InterPro" id="IPR050065">
    <property type="entry name" value="GlmU-like"/>
</dbReference>
<dbReference type="InterPro" id="IPR038009">
    <property type="entry name" value="GlmU_C_LbH"/>
</dbReference>
<dbReference type="InterPro" id="IPR001451">
    <property type="entry name" value="Hexapep"/>
</dbReference>
<dbReference type="InterPro" id="IPR018357">
    <property type="entry name" value="Hexapep_transf_CS"/>
</dbReference>
<dbReference type="InterPro" id="IPR005835">
    <property type="entry name" value="NTP_transferase_dom"/>
</dbReference>
<dbReference type="InterPro" id="IPR029044">
    <property type="entry name" value="Nucleotide-diphossugar_trans"/>
</dbReference>
<dbReference type="InterPro" id="IPR011004">
    <property type="entry name" value="Trimer_LpxA-like_sf"/>
</dbReference>
<dbReference type="NCBIfam" id="TIGR01173">
    <property type="entry name" value="glmU"/>
    <property type="match status" value="1"/>
</dbReference>
<dbReference type="NCBIfam" id="NF010934">
    <property type="entry name" value="PRK14354.1"/>
    <property type="match status" value="1"/>
</dbReference>
<dbReference type="PANTHER" id="PTHR43584:SF3">
    <property type="entry name" value="BIFUNCTIONAL PROTEIN GLMU"/>
    <property type="match status" value="1"/>
</dbReference>
<dbReference type="PANTHER" id="PTHR43584">
    <property type="entry name" value="NUCLEOTIDYL TRANSFERASE"/>
    <property type="match status" value="1"/>
</dbReference>
<dbReference type="Pfam" id="PF00132">
    <property type="entry name" value="Hexapep"/>
    <property type="match status" value="2"/>
</dbReference>
<dbReference type="Pfam" id="PF00483">
    <property type="entry name" value="NTP_transferase"/>
    <property type="match status" value="1"/>
</dbReference>
<dbReference type="SUPFAM" id="SSF53448">
    <property type="entry name" value="Nucleotide-diphospho-sugar transferases"/>
    <property type="match status" value="1"/>
</dbReference>
<dbReference type="SUPFAM" id="SSF51161">
    <property type="entry name" value="Trimeric LpxA-like enzymes"/>
    <property type="match status" value="1"/>
</dbReference>
<dbReference type="PROSITE" id="PS00101">
    <property type="entry name" value="HEXAPEP_TRANSFERASES"/>
    <property type="match status" value="1"/>
</dbReference>
<name>GLMU_STAA8</name>
<accession>Q2G0S3</accession>
<gene>
    <name evidence="1" type="primary">glmU</name>
    <name type="ordered locus">SAOUHSC_00471</name>
</gene>
<feature type="chain" id="PRO_0000263159" description="Bifunctional protein GlmU">
    <location>
        <begin position="1"/>
        <end position="450"/>
    </location>
</feature>
<feature type="region of interest" description="Pyrophosphorylase" evidence="1">
    <location>
        <begin position="1"/>
        <end position="229"/>
    </location>
</feature>
<feature type="region of interest" description="Linker" evidence="1">
    <location>
        <begin position="230"/>
        <end position="250"/>
    </location>
</feature>
<feature type="region of interest" description="N-acetyltransferase" evidence="1">
    <location>
        <begin position="251"/>
        <end position="450"/>
    </location>
</feature>
<feature type="active site" description="Proton acceptor" evidence="1">
    <location>
        <position position="362"/>
    </location>
</feature>
<feature type="binding site" evidence="1">
    <location>
        <begin position="8"/>
        <end position="11"/>
    </location>
    <ligand>
        <name>UDP-N-acetyl-alpha-D-glucosamine</name>
        <dbReference type="ChEBI" id="CHEBI:57705"/>
    </ligand>
</feature>
<feature type="binding site" evidence="1">
    <location>
        <position position="22"/>
    </location>
    <ligand>
        <name>UDP-N-acetyl-alpha-D-glucosamine</name>
        <dbReference type="ChEBI" id="CHEBI:57705"/>
    </ligand>
</feature>
<feature type="binding site" evidence="1">
    <location>
        <position position="72"/>
    </location>
    <ligand>
        <name>UDP-N-acetyl-alpha-D-glucosamine</name>
        <dbReference type="ChEBI" id="CHEBI:57705"/>
    </ligand>
</feature>
<feature type="binding site" evidence="1">
    <location>
        <begin position="77"/>
        <end position="78"/>
    </location>
    <ligand>
        <name>UDP-N-acetyl-alpha-D-glucosamine</name>
        <dbReference type="ChEBI" id="CHEBI:57705"/>
    </ligand>
</feature>
<feature type="binding site" evidence="1">
    <location>
        <position position="102"/>
    </location>
    <ligand>
        <name>Mg(2+)</name>
        <dbReference type="ChEBI" id="CHEBI:18420"/>
    </ligand>
</feature>
<feature type="binding site" evidence="1">
    <location>
        <position position="139"/>
    </location>
    <ligand>
        <name>UDP-N-acetyl-alpha-D-glucosamine</name>
        <dbReference type="ChEBI" id="CHEBI:57705"/>
    </ligand>
</feature>
<feature type="binding site" evidence="1">
    <location>
        <position position="154"/>
    </location>
    <ligand>
        <name>UDP-N-acetyl-alpha-D-glucosamine</name>
        <dbReference type="ChEBI" id="CHEBI:57705"/>
    </ligand>
</feature>
<feature type="binding site" evidence="1">
    <location>
        <position position="227"/>
    </location>
    <ligand>
        <name>Mg(2+)</name>
        <dbReference type="ChEBI" id="CHEBI:18420"/>
    </ligand>
</feature>
<feature type="binding site" evidence="1">
    <location>
        <position position="227"/>
    </location>
    <ligand>
        <name>UDP-N-acetyl-alpha-D-glucosamine</name>
        <dbReference type="ChEBI" id="CHEBI:57705"/>
    </ligand>
</feature>
<feature type="binding site" evidence="1">
    <location>
        <position position="332"/>
    </location>
    <ligand>
        <name>UDP-N-acetyl-alpha-D-glucosamine</name>
        <dbReference type="ChEBI" id="CHEBI:57705"/>
    </ligand>
</feature>
<feature type="binding site" evidence="1">
    <location>
        <position position="350"/>
    </location>
    <ligand>
        <name>UDP-N-acetyl-alpha-D-glucosamine</name>
        <dbReference type="ChEBI" id="CHEBI:57705"/>
    </ligand>
</feature>
<feature type="binding site" evidence="1">
    <location>
        <position position="365"/>
    </location>
    <ligand>
        <name>UDP-N-acetyl-alpha-D-glucosamine</name>
        <dbReference type="ChEBI" id="CHEBI:57705"/>
    </ligand>
</feature>
<feature type="binding site" evidence="1">
    <location>
        <position position="376"/>
    </location>
    <ligand>
        <name>UDP-N-acetyl-alpha-D-glucosamine</name>
        <dbReference type="ChEBI" id="CHEBI:57705"/>
    </ligand>
</feature>
<feature type="binding site" evidence="1">
    <location>
        <begin position="385"/>
        <end position="386"/>
    </location>
    <ligand>
        <name>acetyl-CoA</name>
        <dbReference type="ChEBI" id="CHEBI:57288"/>
    </ligand>
</feature>
<feature type="binding site" evidence="1">
    <location>
        <position position="422"/>
    </location>
    <ligand>
        <name>acetyl-CoA</name>
        <dbReference type="ChEBI" id="CHEBI:57288"/>
    </ligand>
</feature>
<feature type="binding site" evidence="1">
    <location>
        <position position="439"/>
    </location>
    <ligand>
        <name>acetyl-CoA</name>
        <dbReference type="ChEBI" id="CHEBI:57288"/>
    </ligand>
</feature>